<sequence>MSSVPASAYLTLAIILFCIGLFGALTKRNTVIVLVCIELMLNAANLNLVAFSKLGLFPNLTGQIFSLFTMAVAAAEAAVGLAILIALYRNRTTVQVDEMDTLKG</sequence>
<proteinExistence type="inferred from homology"/>
<accession>B7HFI9</accession>
<reference key="1">
    <citation type="submission" date="2008-10" db="EMBL/GenBank/DDBJ databases">
        <title>Genome sequence of Bacillus cereus B4264.</title>
        <authorList>
            <person name="Dodson R.J."/>
            <person name="Durkin A.S."/>
            <person name="Rosovitz M.J."/>
            <person name="Rasko D.A."/>
            <person name="Hoffmaster A."/>
            <person name="Ravel J."/>
            <person name="Sutton G."/>
        </authorList>
    </citation>
    <scope>NUCLEOTIDE SEQUENCE [LARGE SCALE GENOMIC DNA]</scope>
    <source>
        <strain>B4264</strain>
    </source>
</reference>
<protein>
    <recommendedName>
        <fullName evidence="1">NADH-quinone oxidoreductase subunit K</fullName>
        <ecNumber evidence="1">7.1.1.-</ecNumber>
    </recommendedName>
    <alternativeName>
        <fullName evidence="1">NADH dehydrogenase I subunit K</fullName>
    </alternativeName>
    <alternativeName>
        <fullName evidence="1">NDH-1 subunit K</fullName>
    </alternativeName>
</protein>
<evidence type="ECO:0000255" key="1">
    <source>
        <dbReference type="HAMAP-Rule" id="MF_01456"/>
    </source>
</evidence>
<organism>
    <name type="scientific">Bacillus cereus (strain B4264)</name>
    <dbReference type="NCBI Taxonomy" id="405532"/>
    <lineage>
        <taxon>Bacteria</taxon>
        <taxon>Bacillati</taxon>
        <taxon>Bacillota</taxon>
        <taxon>Bacilli</taxon>
        <taxon>Bacillales</taxon>
        <taxon>Bacillaceae</taxon>
        <taxon>Bacillus</taxon>
        <taxon>Bacillus cereus group</taxon>
    </lineage>
</organism>
<dbReference type="EC" id="7.1.1.-" evidence="1"/>
<dbReference type="EMBL" id="CP001176">
    <property type="protein sequence ID" value="ACK59058.1"/>
    <property type="molecule type" value="Genomic_DNA"/>
</dbReference>
<dbReference type="RefSeq" id="WP_000100079.1">
    <property type="nucleotide sequence ID" value="NZ_VEHB01000004.1"/>
</dbReference>
<dbReference type="SMR" id="B7HFI9"/>
<dbReference type="GeneID" id="72451944"/>
<dbReference type="KEGG" id="bcb:BCB4264_A5414"/>
<dbReference type="HOGENOM" id="CLU_144724_0_0_9"/>
<dbReference type="Proteomes" id="UP000007096">
    <property type="component" value="Chromosome"/>
</dbReference>
<dbReference type="GO" id="GO:0030964">
    <property type="term" value="C:NADH dehydrogenase complex"/>
    <property type="evidence" value="ECO:0007669"/>
    <property type="project" value="TreeGrafter"/>
</dbReference>
<dbReference type="GO" id="GO:0005886">
    <property type="term" value="C:plasma membrane"/>
    <property type="evidence" value="ECO:0007669"/>
    <property type="project" value="UniProtKB-SubCell"/>
</dbReference>
<dbReference type="GO" id="GO:0050136">
    <property type="term" value="F:NADH:ubiquinone reductase (non-electrogenic) activity"/>
    <property type="evidence" value="ECO:0007669"/>
    <property type="project" value="UniProtKB-UniRule"/>
</dbReference>
<dbReference type="GO" id="GO:0048038">
    <property type="term" value="F:quinone binding"/>
    <property type="evidence" value="ECO:0007669"/>
    <property type="project" value="UniProtKB-KW"/>
</dbReference>
<dbReference type="GO" id="GO:0042773">
    <property type="term" value="P:ATP synthesis coupled electron transport"/>
    <property type="evidence" value="ECO:0007669"/>
    <property type="project" value="InterPro"/>
</dbReference>
<dbReference type="FunFam" id="1.10.287.3510:FF:000001">
    <property type="entry name" value="NADH-quinone oxidoreductase subunit K"/>
    <property type="match status" value="1"/>
</dbReference>
<dbReference type="Gene3D" id="1.10.287.3510">
    <property type="match status" value="1"/>
</dbReference>
<dbReference type="HAMAP" id="MF_01456">
    <property type="entry name" value="NDH1_NuoK"/>
    <property type="match status" value="1"/>
</dbReference>
<dbReference type="InterPro" id="IPR001133">
    <property type="entry name" value="NADH_UbQ_OxRdtase_chain4L/K"/>
</dbReference>
<dbReference type="InterPro" id="IPR039428">
    <property type="entry name" value="NUOK/Mnh_C1-like"/>
</dbReference>
<dbReference type="NCBIfam" id="NF004320">
    <property type="entry name" value="PRK05715.1-2"/>
    <property type="match status" value="1"/>
</dbReference>
<dbReference type="NCBIfam" id="NF004321">
    <property type="entry name" value="PRK05715.1-3"/>
    <property type="match status" value="1"/>
</dbReference>
<dbReference type="NCBIfam" id="NF004322">
    <property type="entry name" value="PRK05715.1-4"/>
    <property type="match status" value="1"/>
</dbReference>
<dbReference type="NCBIfam" id="NF004323">
    <property type="entry name" value="PRK05715.1-5"/>
    <property type="match status" value="1"/>
</dbReference>
<dbReference type="PANTHER" id="PTHR11434:SF16">
    <property type="entry name" value="NADH-UBIQUINONE OXIDOREDUCTASE CHAIN 4L"/>
    <property type="match status" value="1"/>
</dbReference>
<dbReference type="PANTHER" id="PTHR11434">
    <property type="entry name" value="NADH-UBIQUINONE OXIDOREDUCTASE SUBUNIT ND4L"/>
    <property type="match status" value="1"/>
</dbReference>
<dbReference type="Pfam" id="PF00420">
    <property type="entry name" value="Oxidored_q2"/>
    <property type="match status" value="1"/>
</dbReference>
<gene>
    <name evidence="1" type="primary">nuoK</name>
    <name type="ordered locus">BCB4264_A5414</name>
</gene>
<comment type="function">
    <text evidence="1">NDH-1 shuttles electrons from NADH, via FMN and iron-sulfur (Fe-S) centers, to quinones in the respiratory chain. The immediate electron acceptor for the enzyme in this species is believed to be a menaquinone. Couples the redox reaction to proton translocation (for every two electrons transferred, four hydrogen ions are translocated across the cytoplasmic membrane), and thus conserves the redox energy in a proton gradient.</text>
</comment>
<comment type="catalytic activity">
    <reaction evidence="1">
        <text>a quinone + NADH + 5 H(+)(in) = a quinol + NAD(+) + 4 H(+)(out)</text>
        <dbReference type="Rhea" id="RHEA:57888"/>
        <dbReference type="ChEBI" id="CHEBI:15378"/>
        <dbReference type="ChEBI" id="CHEBI:24646"/>
        <dbReference type="ChEBI" id="CHEBI:57540"/>
        <dbReference type="ChEBI" id="CHEBI:57945"/>
        <dbReference type="ChEBI" id="CHEBI:132124"/>
    </reaction>
</comment>
<comment type="subunit">
    <text evidence="1">NDH-1 is composed of 14 different subunits. Subunits NuoA, H, J, K, L, M, N constitute the membrane sector of the complex.</text>
</comment>
<comment type="subcellular location">
    <subcellularLocation>
        <location evidence="1">Cell membrane</location>
        <topology evidence="1">Multi-pass membrane protein</topology>
    </subcellularLocation>
</comment>
<comment type="similarity">
    <text evidence="1">Belongs to the complex I subunit 4L family.</text>
</comment>
<name>NUOK_BACC4</name>
<feature type="chain" id="PRO_0000389945" description="NADH-quinone oxidoreductase subunit K">
    <location>
        <begin position="1"/>
        <end position="104"/>
    </location>
</feature>
<feature type="transmembrane region" description="Helical" evidence="1">
    <location>
        <begin position="4"/>
        <end position="24"/>
    </location>
</feature>
<feature type="transmembrane region" description="Helical" evidence="1">
    <location>
        <begin position="31"/>
        <end position="51"/>
    </location>
</feature>
<feature type="transmembrane region" description="Helical" evidence="1">
    <location>
        <begin position="67"/>
        <end position="87"/>
    </location>
</feature>
<keyword id="KW-1003">Cell membrane</keyword>
<keyword id="KW-0472">Membrane</keyword>
<keyword id="KW-0520">NAD</keyword>
<keyword id="KW-0874">Quinone</keyword>
<keyword id="KW-1278">Translocase</keyword>
<keyword id="KW-0812">Transmembrane</keyword>
<keyword id="KW-1133">Transmembrane helix</keyword>
<keyword id="KW-0813">Transport</keyword>